<accession>A3N0C2</accession>
<gene>
    <name evidence="1" type="primary">apaH</name>
    <name type="ordered locus">APL_0760</name>
</gene>
<proteinExistence type="inferred from homology"/>
<keyword id="KW-0378">Hydrolase</keyword>
<keyword id="KW-1185">Reference proteome</keyword>
<protein>
    <recommendedName>
        <fullName evidence="1">Bis(5'-nucleosyl)-tetraphosphatase, symmetrical</fullName>
        <ecNumber evidence="1">3.6.1.41</ecNumber>
    </recommendedName>
    <alternativeName>
        <fullName evidence="1">Ap4A hydrolase</fullName>
    </alternativeName>
    <alternativeName>
        <fullName evidence="1">Diadenosine 5',5'''-P1,P4-tetraphosphate pyrophosphohydrolase</fullName>
    </alternativeName>
    <alternativeName>
        <fullName evidence="1">Diadenosine tetraphosphatase</fullName>
    </alternativeName>
</protein>
<dbReference type="EC" id="3.6.1.41" evidence="1"/>
<dbReference type="EMBL" id="CP000569">
    <property type="protein sequence ID" value="ABN73858.1"/>
    <property type="molecule type" value="Genomic_DNA"/>
</dbReference>
<dbReference type="RefSeq" id="WP_011848461.1">
    <property type="nucleotide sequence ID" value="NC_009053.1"/>
</dbReference>
<dbReference type="SMR" id="A3N0C2"/>
<dbReference type="STRING" id="416269.APL_0760"/>
<dbReference type="EnsemblBacteria" id="ABN73858">
    <property type="protein sequence ID" value="ABN73858"/>
    <property type="gene ID" value="APL_0760"/>
</dbReference>
<dbReference type="GeneID" id="48598942"/>
<dbReference type="KEGG" id="apl:APL_0760"/>
<dbReference type="eggNOG" id="COG0639">
    <property type="taxonomic scope" value="Bacteria"/>
</dbReference>
<dbReference type="HOGENOM" id="CLU_056184_2_0_6"/>
<dbReference type="Proteomes" id="UP000001432">
    <property type="component" value="Chromosome"/>
</dbReference>
<dbReference type="GO" id="GO:0008803">
    <property type="term" value="F:bis(5'-nucleosyl)-tetraphosphatase (symmetrical) activity"/>
    <property type="evidence" value="ECO:0007669"/>
    <property type="project" value="UniProtKB-UniRule"/>
</dbReference>
<dbReference type="CDD" id="cd07422">
    <property type="entry name" value="MPP_ApaH"/>
    <property type="match status" value="1"/>
</dbReference>
<dbReference type="Gene3D" id="3.60.21.10">
    <property type="match status" value="1"/>
</dbReference>
<dbReference type="HAMAP" id="MF_00199">
    <property type="entry name" value="ApaH"/>
    <property type="match status" value="1"/>
</dbReference>
<dbReference type="InterPro" id="IPR004617">
    <property type="entry name" value="ApaH"/>
</dbReference>
<dbReference type="InterPro" id="IPR004843">
    <property type="entry name" value="Calcineurin-like_PHP_ApaH"/>
</dbReference>
<dbReference type="InterPro" id="IPR029052">
    <property type="entry name" value="Metallo-depent_PP-like"/>
</dbReference>
<dbReference type="NCBIfam" id="TIGR00668">
    <property type="entry name" value="apaH"/>
    <property type="match status" value="1"/>
</dbReference>
<dbReference type="NCBIfam" id="NF001204">
    <property type="entry name" value="PRK00166.1"/>
    <property type="match status" value="1"/>
</dbReference>
<dbReference type="PANTHER" id="PTHR40942">
    <property type="match status" value="1"/>
</dbReference>
<dbReference type="PANTHER" id="PTHR40942:SF4">
    <property type="entry name" value="CYTOCHROME C5"/>
    <property type="match status" value="1"/>
</dbReference>
<dbReference type="Pfam" id="PF00149">
    <property type="entry name" value="Metallophos"/>
    <property type="match status" value="1"/>
</dbReference>
<dbReference type="PIRSF" id="PIRSF000903">
    <property type="entry name" value="B5n-ttraPtase_sm"/>
    <property type="match status" value="1"/>
</dbReference>
<dbReference type="SUPFAM" id="SSF56300">
    <property type="entry name" value="Metallo-dependent phosphatases"/>
    <property type="match status" value="1"/>
</dbReference>
<name>APAH_ACTP2</name>
<sequence length="270" mass="31224">MATYIVGDLHGCFDELQLLLKQVNYNPAQDELWLTGDLVARGAKSLECLRFVKDPKNNAKTILGNHDLHLLATLLGVKKVKPNDQVDAIFAAEDRADLQNWLRNQPLLIQHPKYGFLLTHAGISPEWNLTETIACAREAEAVLQSGHYADYIAQMYENTPDHWSAEWQGIERWRYIINVFTRMRFCYADKRLDFACKLPVEDAPNELKPWFKLDNPLFHQQDIIFGHWASLMGKADKPNIYALDTGCAWGNHLTMIRWEDKQIFTQERLK</sequence>
<evidence type="ECO:0000255" key="1">
    <source>
        <dbReference type="HAMAP-Rule" id="MF_00199"/>
    </source>
</evidence>
<comment type="function">
    <text evidence="1">Hydrolyzes diadenosine 5',5'''-P1,P4-tetraphosphate to yield ADP.</text>
</comment>
<comment type="catalytic activity">
    <reaction evidence="1">
        <text>P(1),P(4)-bis(5'-adenosyl) tetraphosphate + H2O = 2 ADP + 2 H(+)</text>
        <dbReference type="Rhea" id="RHEA:24252"/>
        <dbReference type="ChEBI" id="CHEBI:15377"/>
        <dbReference type="ChEBI" id="CHEBI:15378"/>
        <dbReference type="ChEBI" id="CHEBI:58141"/>
        <dbReference type="ChEBI" id="CHEBI:456216"/>
        <dbReference type="EC" id="3.6.1.41"/>
    </reaction>
</comment>
<comment type="similarity">
    <text evidence="1">Belongs to the Ap4A hydrolase family.</text>
</comment>
<organism>
    <name type="scientific">Actinobacillus pleuropneumoniae serotype 5b (strain L20)</name>
    <dbReference type="NCBI Taxonomy" id="416269"/>
    <lineage>
        <taxon>Bacteria</taxon>
        <taxon>Pseudomonadati</taxon>
        <taxon>Pseudomonadota</taxon>
        <taxon>Gammaproteobacteria</taxon>
        <taxon>Pasteurellales</taxon>
        <taxon>Pasteurellaceae</taxon>
        <taxon>Actinobacillus</taxon>
    </lineage>
</organism>
<feature type="chain" id="PRO_1000012040" description="Bis(5'-nucleosyl)-tetraphosphatase, symmetrical">
    <location>
        <begin position="1"/>
        <end position="270"/>
    </location>
</feature>
<reference key="1">
    <citation type="journal article" date="2008" name="J. Bacteriol.">
        <title>The complete genome sequence of Actinobacillus pleuropneumoniae L20 (serotype 5b).</title>
        <authorList>
            <person name="Foote S.J."/>
            <person name="Bosse J.T."/>
            <person name="Bouevitch A.B."/>
            <person name="Langford P.R."/>
            <person name="Young N.M."/>
            <person name="Nash J.H.E."/>
        </authorList>
    </citation>
    <scope>NUCLEOTIDE SEQUENCE [LARGE SCALE GENOMIC DNA]</scope>
    <source>
        <strain>L20</strain>
    </source>
</reference>